<protein>
    <recommendedName>
        <fullName evidence="1">Protoheme IX farnesyltransferase 2</fullName>
        <ecNumber evidence="1">2.5.1.141</ecNumber>
    </recommendedName>
    <alternativeName>
        <fullName evidence="1">Heme B farnesyltransferase 2</fullName>
    </alternativeName>
    <alternativeName>
        <fullName evidence="1">Heme O synthase 2</fullName>
    </alternativeName>
</protein>
<keyword id="KW-0997">Cell inner membrane</keyword>
<keyword id="KW-1003">Cell membrane</keyword>
<keyword id="KW-0350">Heme biosynthesis</keyword>
<keyword id="KW-0472">Membrane</keyword>
<keyword id="KW-0808">Transferase</keyword>
<keyword id="KW-0812">Transmembrane</keyword>
<keyword id="KW-1133">Transmembrane helix</keyword>
<comment type="function">
    <text evidence="1">Converts heme B (protoheme IX) to heme O by substitution of the vinyl group on carbon 2 of heme B porphyrin ring with a hydroxyethyl farnesyl side group.</text>
</comment>
<comment type="catalytic activity">
    <reaction evidence="1">
        <text>heme b + (2E,6E)-farnesyl diphosphate + H2O = Fe(II)-heme o + diphosphate</text>
        <dbReference type="Rhea" id="RHEA:28070"/>
        <dbReference type="ChEBI" id="CHEBI:15377"/>
        <dbReference type="ChEBI" id="CHEBI:33019"/>
        <dbReference type="ChEBI" id="CHEBI:60344"/>
        <dbReference type="ChEBI" id="CHEBI:60530"/>
        <dbReference type="ChEBI" id="CHEBI:175763"/>
        <dbReference type="EC" id="2.5.1.141"/>
    </reaction>
</comment>
<comment type="pathway">
    <text evidence="1">Porphyrin-containing compound metabolism; heme O biosynthesis; heme O from protoheme: step 1/1.</text>
</comment>
<comment type="subcellular location">
    <subcellularLocation>
        <location evidence="1">Cell inner membrane</location>
        <topology evidence="1">Multi-pass membrane protein</topology>
    </subcellularLocation>
</comment>
<comment type="miscellaneous">
    <text evidence="1">Carbon 2 of the heme B porphyrin ring is defined according to the Fischer nomenclature.</text>
</comment>
<comment type="similarity">
    <text evidence="1">Belongs to the UbiA prenyltransferase family. Protoheme IX farnesyltransferase subfamily.</text>
</comment>
<feature type="chain" id="PRO_0000326915" description="Protoheme IX farnesyltransferase 2">
    <location>
        <begin position="1"/>
        <end position="305"/>
    </location>
</feature>
<feature type="transmembrane region" description="Helical" evidence="1">
    <location>
        <begin position="31"/>
        <end position="51"/>
    </location>
</feature>
<feature type="transmembrane region" description="Helical" evidence="1">
    <location>
        <begin position="53"/>
        <end position="73"/>
    </location>
</feature>
<feature type="transmembrane region" description="Helical" evidence="1">
    <location>
        <begin position="103"/>
        <end position="123"/>
    </location>
</feature>
<feature type="transmembrane region" description="Helical" evidence="1">
    <location>
        <begin position="125"/>
        <end position="145"/>
    </location>
</feature>
<feature type="transmembrane region" description="Helical" evidence="1">
    <location>
        <begin position="152"/>
        <end position="172"/>
    </location>
</feature>
<feature type="transmembrane region" description="Helical" evidence="1">
    <location>
        <begin position="179"/>
        <end position="199"/>
    </location>
</feature>
<feature type="transmembrane region" description="Helical" evidence="1">
    <location>
        <begin position="231"/>
        <end position="251"/>
    </location>
</feature>
<feature type="transmembrane region" description="Helical" evidence="1">
    <location>
        <begin position="277"/>
        <end position="297"/>
    </location>
</feature>
<evidence type="ECO:0000255" key="1">
    <source>
        <dbReference type="HAMAP-Rule" id="MF_00154"/>
    </source>
</evidence>
<reference key="1">
    <citation type="submission" date="2006-06" db="EMBL/GenBank/DDBJ databases">
        <title>Complete sequence of Pseudoalteromonas atlantica T6c.</title>
        <authorList>
            <consortium name="US DOE Joint Genome Institute"/>
            <person name="Copeland A."/>
            <person name="Lucas S."/>
            <person name="Lapidus A."/>
            <person name="Barry K."/>
            <person name="Detter J.C."/>
            <person name="Glavina del Rio T."/>
            <person name="Hammon N."/>
            <person name="Israni S."/>
            <person name="Dalin E."/>
            <person name="Tice H."/>
            <person name="Pitluck S."/>
            <person name="Saunders E."/>
            <person name="Brettin T."/>
            <person name="Bruce D."/>
            <person name="Han C."/>
            <person name="Tapia R."/>
            <person name="Gilna P."/>
            <person name="Schmutz J."/>
            <person name="Larimer F."/>
            <person name="Land M."/>
            <person name="Hauser L."/>
            <person name="Kyrpides N."/>
            <person name="Kim E."/>
            <person name="Karls A.C."/>
            <person name="Bartlett D."/>
            <person name="Higgins B.P."/>
            <person name="Richardson P."/>
        </authorList>
    </citation>
    <scope>NUCLEOTIDE SEQUENCE [LARGE SCALE GENOMIC DNA]</scope>
    <source>
        <strain>T6c / ATCC BAA-1087</strain>
    </source>
</reference>
<gene>
    <name evidence="1" type="primary">cyoE2</name>
    <name type="ordered locus">Patl_4238</name>
</gene>
<accession>Q15N01</accession>
<dbReference type="EC" id="2.5.1.141" evidence="1"/>
<dbReference type="EMBL" id="CP000388">
    <property type="protein sequence ID" value="ABG42737.1"/>
    <property type="molecule type" value="Genomic_DNA"/>
</dbReference>
<dbReference type="RefSeq" id="WP_011576923.1">
    <property type="nucleotide sequence ID" value="NC_008228.1"/>
</dbReference>
<dbReference type="SMR" id="Q15N01"/>
<dbReference type="STRING" id="342610.Patl_4238"/>
<dbReference type="KEGG" id="pat:Patl_4238"/>
<dbReference type="eggNOG" id="COG0109">
    <property type="taxonomic scope" value="Bacteria"/>
</dbReference>
<dbReference type="HOGENOM" id="CLU_029631_0_2_6"/>
<dbReference type="OrthoDB" id="9814417at2"/>
<dbReference type="UniPathway" id="UPA00834">
    <property type="reaction ID" value="UER00712"/>
</dbReference>
<dbReference type="Proteomes" id="UP000001981">
    <property type="component" value="Chromosome"/>
</dbReference>
<dbReference type="GO" id="GO:0005886">
    <property type="term" value="C:plasma membrane"/>
    <property type="evidence" value="ECO:0007669"/>
    <property type="project" value="UniProtKB-SubCell"/>
</dbReference>
<dbReference type="GO" id="GO:0008495">
    <property type="term" value="F:protoheme IX farnesyltransferase activity"/>
    <property type="evidence" value="ECO:0007669"/>
    <property type="project" value="UniProtKB-UniRule"/>
</dbReference>
<dbReference type="GO" id="GO:0048034">
    <property type="term" value="P:heme O biosynthetic process"/>
    <property type="evidence" value="ECO:0007669"/>
    <property type="project" value="UniProtKB-UniRule"/>
</dbReference>
<dbReference type="CDD" id="cd13957">
    <property type="entry name" value="PT_UbiA_Cox10"/>
    <property type="match status" value="1"/>
</dbReference>
<dbReference type="FunFam" id="1.10.357.140:FF:000001">
    <property type="entry name" value="Protoheme IX farnesyltransferase"/>
    <property type="match status" value="1"/>
</dbReference>
<dbReference type="Gene3D" id="1.10.357.140">
    <property type="entry name" value="UbiA prenyltransferase"/>
    <property type="match status" value="1"/>
</dbReference>
<dbReference type="HAMAP" id="MF_00154">
    <property type="entry name" value="CyoE_CtaB"/>
    <property type="match status" value="1"/>
</dbReference>
<dbReference type="InterPro" id="IPR006369">
    <property type="entry name" value="Protohaem_IX_farnesylTrfase"/>
</dbReference>
<dbReference type="InterPro" id="IPR000537">
    <property type="entry name" value="UbiA_prenyltransferase"/>
</dbReference>
<dbReference type="InterPro" id="IPR030470">
    <property type="entry name" value="UbiA_prenylTrfase_CS"/>
</dbReference>
<dbReference type="InterPro" id="IPR044878">
    <property type="entry name" value="UbiA_sf"/>
</dbReference>
<dbReference type="NCBIfam" id="TIGR01473">
    <property type="entry name" value="cyoE_ctaB"/>
    <property type="match status" value="1"/>
</dbReference>
<dbReference type="NCBIfam" id="NF003349">
    <property type="entry name" value="PRK04375.1-2"/>
    <property type="match status" value="1"/>
</dbReference>
<dbReference type="PANTHER" id="PTHR43448:SF7">
    <property type="entry name" value="4-HYDROXYBENZOATE SOLANESYLTRANSFERASE"/>
    <property type="match status" value="1"/>
</dbReference>
<dbReference type="PANTHER" id="PTHR43448">
    <property type="entry name" value="PROTOHEME IX FARNESYLTRANSFERASE, MITOCHONDRIAL"/>
    <property type="match status" value="1"/>
</dbReference>
<dbReference type="Pfam" id="PF01040">
    <property type="entry name" value="UbiA"/>
    <property type="match status" value="1"/>
</dbReference>
<dbReference type="PROSITE" id="PS00943">
    <property type="entry name" value="UBIA"/>
    <property type="match status" value="1"/>
</dbReference>
<name>CYOE2_PSEA6</name>
<sequence length="305" mass="33859">MSKSVGVAPHNIVNKSGLHWRDYYEMTKPKVVMLLLLTALVGMCLASETWISWKILLAGLTGIGFLSSAAAVINHVVDRKIDAQMARTSNRPMPKGKVSPQRALVFAGVLTVVGYLILELWVNRLTALLTLASLVGYAFIYTMYLKRATPQNIVIGGLAGAAPPLLGWTAVTNDIHAHALLLVLIIFIWTPPHFWALAIHREKDYARAKIPMLPCTHGIEFTKTSILLYTVLLALISVLPYLIGMTGAIYLLGSSALNAGFLYYAWKLKFASDEHTAMKTFKFSIIHLMVLFVVLLVDHYMRFTF</sequence>
<proteinExistence type="inferred from homology"/>
<organism>
    <name type="scientific">Pseudoalteromonas atlantica (strain T6c / ATCC BAA-1087)</name>
    <dbReference type="NCBI Taxonomy" id="3042615"/>
    <lineage>
        <taxon>Bacteria</taxon>
        <taxon>Pseudomonadati</taxon>
        <taxon>Pseudomonadota</taxon>
        <taxon>Gammaproteobacteria</taxon>
        <taxon>Alteromonadales</taxon>
        <taxon>Alteromonadaceae</taxon>
        <taxon>Paraglaciecola</taxon>
    </lineage>
</organism>